<organism>
    <name type="scientific">Mycoplasma genitalium (strain ATCC 33530 / DSM 19775 / NCTC 10195 / G37)</name>
    <name type="common">Mycoplasmoides genitalium</name>
    <dbReference type="NCBI Taxonomy" id="243273"/>
    <lineage>
        <taxon>Bacteria</taxon>
        <taxon>Bacillati</taxon>
        <taxon>Mycoplasmatota</taxon>
        <taxon>Mycoplasmoidales</taxon>
        <taxon>Mycoplasmoidaceae</taxon>
        <taxon>Mycoplasmoides</taxon>
    </lineage>
</organism>
<dbReference type="EC" id="3.6.4.-"/>
<dbReference type="EMBL" id="L43967">
    <property type="protein sequence ID" value="AAC71234.2"/>
    <property type="molecule type" value="Genomic_DNA"/>
</dbReference>
<dbReference type="EMBL" id="U02179">
    <property type="protein sequence ID" value="AAD12465.1"/>
    <property type="molecule type" value="Genomic_DNA"/>
</dbReference>
<dbReference type="EMBL" id="U01757">
    <property type="protein sequence ID" value="AAD10571.1"/>
    <property type="molecule type" value="Genomic_DNA"/>
</dbReference>
<dbReference type="PIR" id="G64201">
    <property type="entry name" value="G64201"/>
</dbReference>
<dbReference type="PIR" id="H64201">
    <property type="entry name" value="H64201"/>
</dbReference>
<dbReference type="PIR" id="T09676">
    <property type="entry name" value="T09676"/>
</dbReference>
<dbReference type="RefSeq" id="WP_010869292.1">
    <property type="nucleotide sequence ID" value="NC_000908.2"/>
</dbReference>
<dbReference type="SMR" id="P47264"/>
<dbReference type="STRING" id="243273.MG_018"/>
<dbReference type="GeneID" id="88282133"/>
<dbReference type="KEGG" id="mge:MG_018"/>
<dbReference type="eggNOG" id="COG0553">
    <property type="taxonomic scope" value="Bacteria"/>
</dbReference>
<dbReference type="HOGENOM" id="CLU_000315_21_1_14"/>
<dbReference type="InParanoid" id="P47264"/>
<dbReference type="OrthoDB" id="9760715at2"/>
<dbReference type="BioCyc" id="MGEN243273:G1GJ2-18-MONOMER"/>
<dbReference type="Proteomes" id="UP000000807">
    <property type="component" value="Chromosome"/>
</dbReference>
<dbReference type="GO" id="GO:0005524">
    <property type="term" value="F:ATP binding"/>
    <property type="evidence" value="ECO:0007669"/>
    <property type="project" value="UniProtKB-KW"/>
</dbReference>
<dbReference type="GO" id="GO:0003682">
    <property type="term" value="F:chromatin binding"/>
    <property type="evidence" value="ECO:0000318"/>
    <property type="project" value="GO_Central"/>
</dbReference>
<dbReference type="GO" id="GO:0003677">
    <property type="term" value="F:DNA binding"/>
    <property type="evidence" value="ECO:0000318"/>
    <property type="project" value="GO_Central"/>
</dbReference>
<dbReference type="GO" id="GO:0004386">
    <property type="term" value="F:helicase activity"/>
    <property type="evidence" value="ECO:0007669"/>
    <property type="project" value="UniProtKB-KW"/>
</dbReference>
<dbReference type="GO" id="GO:0016787">
    <property type="term" value="F:hydrolase activity"/>
    <property type="evidence" value="ECO:0007669"/>
    <property type="project" value="UniProtKB-KW"/>
</dbReference>
<dbReference type="GO" id="GO:0140750">
    <property type="term" value="F:nucleosome array spacer activity"/>
    <property type="evidence" value="ECO:0000318"/>
    <property type="project" value="GO_Central"/>
</dbReference>
<dbReference type="GO" id="GO:0008270">
    <property type="term" value="F:zinc ion binding"/>
    <property type="evidence" value="ECO:0007669"/>
    <property type="project" value="UniProtKB-KW"/>
</dbReference>
<dbReference type="GO" id="GO:0045944">
    <property type="term" value="P:positive regulation of transcription by RNA polymerase II"/>
    <property type="evidence" value="ECO:0000318"/>
    <property type="project" value="GO_Central"/>
</dbReference>
<dbReference type="CDD" id="cd18012">
    <property type="entry name" value="DEXQc_arch_SWI2_SNF2"/>
    <property type="match status" value="1"/>
</dbReference>
<dbReference type="CDD" id="cd18793">
    <property type="entry name" value="SF2_C_SNF"/>
    <property type="match status" value="1"/>
</dbReference>
<dbReference type="Gene3D" id="3.40.50.300">
    <property type="entry name" value="P-loop containing nucleotide triphosphate hydrolases"/>
    <property type="match status" value="1"/>
</dbReference>
<dbReference type="Gene3D" id="3.40.50.10810">
    <property type="entry name" value="Tandem AAA-ATPase domain"/>
    <property type="match status" value="1"/>
</dbReference>
<dbReference type="InterPro" id="IPR014001">
    <property type="entry name" value="Helicase_ATP-bd"/>
</dbReference>
<dbReference type="InterPro" id="IPR001650">
    <property type="entry name" value="Helicase_C-like"/>
</dbReference>
<dbReference type="InterPro" id="IPR027417">
    <property type="entry name" value="P-loop_NTPase"/>
</dbReference>
<dbReference type="InterPro" id="IPR038718">
    <property type="entry name" value="SNF2-like_sf"/>
</dbReference>
<dbReference type="InterPro" id="IPR049730">
    <property type="entry name" value="SNF2/RAD54-like_C"/>
</dbReference>
<dbReference type="InterPro" id="IPR000330">
    <property type="entry name" value="SNF2_N"/>
</dbReference>
<dbReference type="InterPro" id="IPR007527">
    <property type="entry name" value="Znf_SWIM"/>
</dbReference>
<dbReference type="PANTHER" id="PTHR10799">
    <property type="entry name" value="SNF2/RAD54 HELICASE FAMILY"/>
    <property type="match status" value="1"/>
</dbReference>
<dbReference type="Pfam" id="PF00271">
    <property type="entry name" value="Helicase_C"/>
    <property type="match status" value="1"/>
</dbReference>
<dbReference type="Pfam" id="PF00176">
    <property type="entry name" value="SNF2-rel_dom"/>
    <property type="match status" value="1"/>
</dbReference>
<dbReference type="Pfam" id="PF04434">
    <property type="entry name" value="SWIM"/>
    <property type="match status" value="1"/>
</dbReference>
<dbReference type="SMART" id="SM00487">
    <property type="entry name" value="DEXDc"/>
    <property type="match status" value="1"/>
</dbReference>
<dbReference type="SMART" id="SM00490">
    <property type="entry name" value="HELICc"/>
    <property type="match status" value="1"/>
</dbReference>
<dbReference type="SUPFAM" id="SSF52540">
    <property type="entry name" value="P-loop containing nucleoside triphosphate hydrolases"/>
    <property type="match status" value="2"/>
</dbReference>
<dbReference type="PROSITE" id="PS51192">
    <property type="entry name" value="HELICASE_ATP_BIND_1"/>
    <property type="match status" value="1"/>
</dbReference>
<dbReference type="PROSITE" id="PS51194">
    <property type="entry name" value="HELICASE_CTER"/>
    <property type="match status" value="1"/>
</dbReference>
<dbReference type="PROSITE" id="PS50966">
    <property type="entry name" value="ZF_SWIM"/>
    <property type="match status" value="1"/>
</dbReference>
<evidence type="ECO:0000255" key="1">
    <source>
        <dbReference type="PROSITE-ProRule" id="PRU00325"/>
    </source>
</evidence>
<evidence type="ECO:0000255" key="2">
    <source>
        <dbReference type="PROSITE-ProRule" id="PRU00541"/>
    </source>
</evidence>
<evidence type="ECO:0000255" key="3">
    <source>
        <dbReference type="PROSITE-ProRule" id="PRU00542"/>
    </source>
</evidence>
<evidence type="ECO:0000269" key="4">
    <source>
    </source>
</evidence>
<evidence type="ECO:0000305" key="5"/>
<proteinExistence type="inferred from homology"/>
<gene>
    <name type="ordered locus">MG018</name>
</gene>
<sequence>MTVAEIKKLALNNQVFNEAKALLEKGNVIFPKKFLKRKKIIIEVLDGKVFKVQINLKTAAAHLDCSCSNDKQNCVHIIAALLKYNDLKNQDNKEFDLNKADKLECKEVEILIENVSLAIVNGSWKLKIGFVINIDKVQTNTTALRFYCCDNKDVYFLHTEDEQLFRIALDKFNSVERQTLLIFDQLNKTKQMQYENNSLLFNLDQFLSLVKEVKKPSLFLLNEDKTDNILFLRSQHKINGLSHVCGFLNNKVFDFVSYNEKTKQIVLRLAYLNKFTDFKFPYNINIYKLAFGETLFFHFLIHLKMNGFKNIFFQSDVVIVKESEYLPKMFLTIEFNTQKNKFITDAFFKYKNKNSNTLTTVYPHRYYLAQKTNTSNFNRLLFYEQALQRFYEELFQIDYLRRFENIPIKDKNQIALFKTVFDDYKTIDLAELKLTSNLLNYKQLHFSISDIKALKIEDRQLKIEFKAGGIDLKLIKSVLSNYYKGNAICIGEDGWYDLNDENAKALISFWSQIDLRNATCDANNNLLLAKYHLFEVVDTISKYTDVTNLLDEKTALQLKIASENQFHLSLDNNQINNLRKYQKEGVKWIRALEDNQFGGILADEMGLGKTAQVIFAMLDSYQSTKSLLPSLIIVPASLLLNWKSEFQKFAPHVKIVTANGNFKERSQVYESLKNQILLMSFNVLRSDIKWISQKKFHYVVIDEAQGIKNENSTVTKAAKKIKGNFCLALTGTPIENRLLDLWSCFDFVLPNFLGNKKQFSDQFEKEKNDESFQKLMKKTSPFILRRTKNKVLKELPKKIITDIYVELSEEHQKLYDKQKTDGLKEIKESDAKNALNILSLILKLRHICSLVKDNDVNDFEDNSKANAALNIIYEALENKRKVILFTQFLDVIDCFKQTLKNQKIDHLVFDGRKTVKNRNTIIQKFNSAKEPCVMLASLKAGGVGINLTAAEVVIHFDVWWNSAVENQATDRAHRIGQSKTVQVYRIIAKNTIEERVCQVQNQKQELVKKTLVEDVNFFKSLSHEELLKLFE</sequence>
<keyword id="KW-0067">ATP-binding</keyword>
<keyword id="KW-0347">Helicase</keyword>
<keyword id="KW-0378">Hydrolase</keyword>
<keyword id="KW-0479">Metal-binding</keyword>
<keyword id="KW-0547">Nucleotide-binding</keyword>
<keyword id="KW-1185">Reference proteome</keyword>
<keyword id="KW-0862">Zinc</keyword>
<keyword id="KW-0863">Zinc-finger</keyword>
<accession>P47264</accession>
<accession>P47262</accession>
<accession>P47263</accession>
<accession>Q49209</accession>
<accession>Q49302</accession>
<reference key="1">
    <citation type="journal article" date="1995" name="Science">
        <title>The minimal gene complement of Mycoplasma genitalium.</title>
        <authorList>
            <person name="Fraser C.M."/>
            <person name="Gocayne J.D."/>
            <person name="White O."/>
            <person name="Adams M.D."/>
            <person name="Clayton R.A."/>
            <person name="Fleischmann R.D."/>
            <person name="Bult C.J."/>
            <person name="Kerlavage A.R."/>
            <person name="Sutton G.G."/>
            <person name="Kelley J.M."/>
            <person name="Fritchman J.L."/>
            <person name="Weidman J.F."/>
            <person name="Small K.V."/>
            <person name="Sandusky M."/>
            <person name="Fuhrmann J.L."/>
            <person name="Nguyen D.T."/>
            <person name="Utterback T.R."/>
            <person name="Saudek D.M."/>
            <person name="Phillips C.A."/>
            <person name="Merrick J.M."/>
            <person name="Tomb J.-F."/>
            <person name="Dougherty B.A."/>
            <person name="Bott K.F."/>
            <person name="Hu P.-C."/>
            <person name="Lucier T.S."/>
            <person name="Peterson S.N."/>
            <person name="Smith H.O."/>
            <person name="Hutchison C.A. III"/>
            <person name="Venter J.C."/>
        </authorList>
    </citation>
    <scope>NUCLEOTIDE SEQUENCE [LARGE SCALE GENOMIC DNA]</scope>
    <source>
        <strain>ATCC 33530 / DSM 19775 / NCTC 10195 / G37</strain>
    </source>
</reference>
<reference key="2">
    <citation type="submission" date="2005-09" db="EMBL/GenBank/DDBJ databases">
        <authorList>
            <person name="Fraser C.M."/>
            <person name="Gocayne J.D."/>
            <person name="White O."/>
            <person name="Adams M.D."/>
            <person name="Clayton R.A."/>
            <person name="Fleischmann R.D."/>
            <person name="Bult C.J."/>
            <person name="Kerlavage A.R."/>
            <person name="Sutton G.G."/>
            <person name="Kelley J.M."/>
            <person name="Fritchman J.L."/>
            <person name="Weidman J.F."/>
            <person name="Small K.V."/>
            <person name="Sandusky M."/>
            <person name="Fuhrmann J.L."/>
            <person name="Nguyen D.T."/>
            <person name="Utterback T.R."/>
            <person name="Saudek D.M."/>
            <person name="Phillips C.A."/>
            <person name="Merrick J.M."/>
            <person name="Tomb J.-F."/>
            <person name="Dougherty B.A."/>
            <person name="Bott K.F."/>
            <person name="Hu P.-C."/>
            <person name="Lucier T.S."/>
            <person name="Peterson S.N."/>
            <person name="Smith H.O."/>
            <person name="Hutchison C.A. III"/>
            <person name="Venter J.C."/>
        </authorList>
    </citation>
    <scope>SEQUENCE REVISION</scope>
</reference>
<reference key="3">
    <citation type="journal article" date="1993" name="J. Bacteriol.">
        <title>A survey of the Mycoplasma genitalium genome by using random sequencing.</title>
        <authorList>
            <person name="Peterson S.N."/>
            <person name="Hu P.-C."/>
            <person name="Bott K.F."/>
            <person name="Hutchison C.A. III"/>
        </authorList>
    </citation>
    <scope>NUCLEOTIDE SEQUENCE [GENOMIC DNA] OF 640-740 AND 802-902</scope>
    <source>
        <strain>ATCC 33530 / DSM 19775 / NCTC 10195 / G37</strain>
    </source>
</reference>
<reference key="4">
    <citation type="journal article" date="2006" name="Proc. Natl. Acad. Sci. U.S.A.">
        <title>Essential genes of a minimal bacterium.</title>
        <authorList>
            <person name="Glass J.I."/>
            <person name="Assad-Garcia N."/>
            <person name="Alperovich N."/>
            <person name="Yooseph S."/>
            <person name="Lewis M.R."/>
            <person name="Maruf M."/>
            <person name="Hutchison C.A. III"/>
            <person name="Smith H.O."/>
            <person name="Venter J.C."/>
        </authorList>
    </citation>
    <scope>DISRUPTION PHENOTYPE</scope>
    <source>
        <strain>ATCC 33530 / DSM 19775 / NCTC 10195 / G37</strain>
    </source>
</reference>
<comment type="disruption phenotype">
    <text evidence="4">Not essential, it can be deleted.</text>
</comment>
<comment type="similarity">
    <text evidence="5">Belongs to the SNF2/RAD54 helicase family.</text>
</comment>
<protein>
    <recommendedName>
        <fullName>Uncharacterized ATP-dependent helicase MG018</fullName>
        <ecNumber>3.6.4.-</ecNumber>
    </recommendedName>
</protein>
<name>Y018_MYCGE</name>
<feature type="chain" id="PRO_0000074380" description="Uncharacterized ATP-dependent helicase MG018">
    <location>
        <begin position="1"/>
        <end position="1031"/>
    </location>
</feature>
<feature type="domain" description="Helicase ATP-binding" evidence="2">
    <location>
        <begin position="590"/>
        <end position="751"/>
    </location>
</feature>
<feature type="domain" description="Helicase C-terminal" evidence="3">
    <location>
        <begin position="868"/>
        <end position="1022"/>
    </location>
</feature>
<feature type="zinc finger region" description="SWIM-type" evidence="1">
    <location>
        <begin position="50"/>
        <end position="85"/>
    </location>
</feature>
<feature type="short sequence motif" description="DEAQ box">
    <location>
        <begin position="702"/>
        <end position="705"/>
    </location>
</feature>
<feature type="binding site" evidence="2">
    <location>
        <begin position="603"/>
        <end position="610"/>
    </location>
    <ligand>
        <name>ATP</name>
        <dbReference type="ChEBI" id="CHEBI:30616"/>
    </ligand>
</feature>
<feature type="sequence conflict" description="In Ref. 3; AAD10571." evidence="5" ref="3">
    <original>D</original>
    <variation>S</variation>
    <location>
        <position position="893"/>
    </location>
</feature>